<reference key="1">
    <citation type="journal article" date="2001" name="Nature">
        <title>Complete genome sequence of Salmonella enterica serovar Typhimurium LT2.</title>
        <authorList>
            <person name="McClelland M."/>
            <person name="Sanderson K.E."/>
            <person name="Spieth J."/>
            <person name="Clifton S.W."/>
            <person name="Latreille P."/>
            <person name="Courtney L."/>
            <person name="Porwollik S."/>
            <person name="Ali J."/>
            <person name="Dante M."/>
            <person name="Du F."/>
            <person name="Hou S."/>
            <person name="Layman D."/>
            <person name="Leonard S."/>
            <person name="Nguyen C."/>
            <person name="Scott K."/>
            <person name="Holmes A."/>
            <person name="Grewal N."/>
            <person name="Mulvaney E."/>
            <person name="Ryan E."/>
            <person name="Sun H."/>
            <person name="Florea L."/>
            <person name="Miller W."/>
            <person name="Stoneking T."/>
            <person name="Nhan M."/>
            <person name="Waterston R."/>
            <person name="Wilson R.K."/>
        </authorList>
    </citation>
    <scope>NUCLEOTIDE SEQUENCE [LARGE SCALE GENOMIC DNA]</scope>
    <source>
        <strain>LT2 / SGSC1412 / ATCC 700720</strain>
    </source>
</reference>
<keyword id="KW-0029">Amino-acid transport</keyword>
<keyword id="KW-0997">Cell inner membrane</keyword>
<keyword id="KW-1003">Cell membrane</keyword>
<keyword id="KW-0472">Membrane</keyword>
<keyword id="KW-1185">Reference proteome</keyword>
<keyword id="KW-0769">Symport</keyword>
<keyword id="KW-0812">Transmembrane</keyword>
<keyword id="KW-1133">Transmembrane helix</keyword>
<keyword id="KW-0813">Transport</keyword>
<feature type="chain" id="PRO_0000309119" description="Serine/threonine transporter SstT">
    <location>
        <begin position="1"/>
        <end position="414"/>
    </location>
</feature>
<feature type="transmembrane region" description="Helical" evidence="1">
    <location>
        <begin position="16"/>
        <end position="36"/>
    </location>
</feature>
<feature type="transmembrane region" description="Helical" evidence="1">
    <location>
        <begin position="46"/>
        <end position="66"/>
    </location>
</feature>
<feature type="transmembrane region" description="Helical" evidence="1">
    <location>
        <begin position="84"/>
        <end position="104"/>
    </location>
</feature>
<feature type="transmembrane region" description="Helical" evidence="1">
    <location>
        <begin position="143"/>
        <end position="163"/>
    </location>
</feature>
<feature type="transmembrane region" description="Helical" evidence="1">
    <location>
        <begin position="180"/>
        <end position="200"/>
    </location>
</feature>
<feature type="transmembrane region" description="Helical" evidence="1">
    <location>
        <begin position="219"/>
        <end position="239"/>
    </location>
</feature>
<feature type="transmembrane region" description="Helical" evidence="1">
    <location>
        <begin position="300"/>
        <end position="320"/>
    </location>
</feature>
<feature type="transmembrane region" description="Helical" evidence="1">
    <location>
        <begin position="332"/>
        <end position="352"/>
    </location>
</feature>
<gene>
    <name evidence="1" type="primary">sstT</name>
    <name type="ordered locus">STM3225</name>
</gene>
<protein>
    <recommendedName>
        <fullName evidence="1">Serine/threonine transporter SstT</fullName>
    </recommendedName>
    <alternativeName>
        <fullName evidence="1">Na(+)/serine-threonine symporter</fullName>
    </alternativeName>
</protein>
<proteinExistence type="inferred from homology"/>
<evidence type="ECO:0000255" key="1">
    <source>
        <dbReference type="HAMAP-Rule" id="MF_01582"/>
    </source>
</evidence>
<organism>
    <name type="scientific">Salmonella typhimurium (strain LT2 / SGSC1412 / ATCC 700720)</name>
    <dbReference type="NCBI Taxonomy" id="99287"/>
    <lineage>
        <taxon>Bacteria</taxon>
        <taxon>Pseudomonadati</taxon>
        <taxon>Pseudomonadota</taxon>
        <taxon>Gammaproteobacteria</taxon>
        <taxon>Enterobacterales</taxon>
        <taxon>Enterobacteriaceae</taxon>
        <taxon>Salmonella</taxon>
    </lineage>
</organism>
<comment type="function">
    <text evidence="1">Involved in the import of serine and threonine into the cell, with the concomitant import of sodium (symport system).</text>
</comment>
<comment type="catalytic activity">
    <reaction evidence="1">
        <text>L-serine(in) + Na(+)(in) = L-serine(out) + Na(+)(out)</text>
        <dbReference type="Rhea" id="RHEA:29575"/>
        <dbReference type="ChEBI" id="CHEBI:29101"/>
        <dbReference type="ChEBI" id="CHEBI:33384"/>
    </reaction>
    <physiologicalReaction direction="right-to-left" evidence="1">
        <dbReference type="Rhea" id="RHEA:29577"/>
    </physiologicalReaction>
</comment>
<comment type="catalytic activity">
    <reaction evidence="1">
        <text>L-threonine(in) + Na(+)(in) = L-threonine(out) + Na(+)(out)</text>
        <dbReference type="Rhea" id="RHEA:69999"/>
        <dbReference type="ChEBI" id="CHEBI:29101"/>
        <dbReference type="ChEBI" id="CHEBI:57926"/>
    </reaction>
    <physiologicalReaction direction="right-to-left" evidence="1">
        <dbReference type="Rhea" id="RHEA:70001"/>
    </physiologicalReaction>
</comment>
<comment type="subcellular location">
    <subcellularLocation>
        <location evidence="1">Cell inner membrane</location>
        <topology evidence="1">Multi-pass membrane protein</topology>
    </subcellularLocation>
</comment>
<comment type="similarity">
    <text evidence="1">Belongs to the dicarboxylate/amino acid:cation symporter (DAACS) (TC 2.A.23) family.</text>
</comment>
<name>SSTT_SALTY</name>
<accession>Q8ZLX1</accession>
<dbReference type="EMBL" id="AE006468">
    <property type="protein sequence ID" value="AAL22098.1"/>
    <property type="molecule type" value="Genomic_DNA"/>
</dbReference>
<dbReference type="RefSeq" id="WP_000235363.1">
    <property type="nucleotide sequence ID" value="NC_003197.2"/>
</dbReference>
<dbReference type="SMR" id="Q8ZLX1"/>
<dbReference type="STRING" id="99287.STM3225"/>
<dbReference type="PaxDb" id="99287-STM3225"/>
<dbReference type="KEGG" id="stm:STM3225"/>
<dbReference type="PATRIC" id="fig|99287.12.peg.3421"/>
<dbReference type="HOGENOM" id="CLU_044581_0_0_6"/>
<dbReference type="OMA" id="YIGILTW"/>
<dbReference type="PhylomeDB" id="Q8ZLX1"/>
<dbReference type="BioCyc" id="SENT99287:STM3225-MONOMER"/>
<dbReference type="Proteomes" id="UP000001014">
    <property type="component" value="Chromosome"/>
</dbReference>
<dbReference type="GO" id="GO:0005886">
    <property type="term" value="C:plasma membrane"/>
    <property type="evidence" value="ECO:0000318"/>
    <property type="project" value="GO_Central"/>
</dbReference>
<dbReference type="GO" id="GO:0005295">
    <property type="term" value="F:neutral L-amino acid:sodium symporter activity"/>
    <property type="evidence" value="ECO:0000318"/>
    <property type="project" value="GO_Central"/>
</dbReference>
<dbReference type="GO" id="GO:0032329">
    <property type="term" value="P:serine transport"/>
    <property type="evidence" value="ECO:0000318"/>
    <property type="project" value="GO_Central"/>
</dbReference>
<dbReference type="GO" id="GO:0015826">
    <property type="term" value="P:threonine transport"/>
    <property type="evidence" value="ECO:0007669"/>
    <property type="project" value="InterPro"/>
</dbReference>
<dbReference type="FunFam" id="1.10.3860.10:FF:000003">
    <property type="entry name" value="Serine/threonine transporter sstT"/>
    <property type="match status" value="1"/>
</dbReference>
<dbReference type="Gene3D" id="1.10.3860.10">
    <property type="entry name" value="Sodium:dicarboxylate symporter"/>
    <property type="match status" value="1"/>
</dbReference>
<dbReference type="HAMAP" id="MF_01582">
    <property type="entry name" value="Ser_Thr_transp_SstT"/>
    <property type="match status" value="1"/>
</dbReference>
<dbReference type="InterPro" id="IPR001991">
    <property type="entry name" value="Na-dicarboxylate_symporter"/>
</dbReference>
<dbReference type="InterPro" id="IPR036458">
    <property type="entry name" value="Na:dicarbo_symporter_sf"/>
</dbReference>
<dbReference type="InterPro" id="IPR023025">
    <property type="entry name" value="Ser_Thr_transp_SstT"/>
</dbReference>
<dbReference type="NCBIfam" id="NF010151">
    <property type="entry name" value="PRK13628.1"/>
    <property type="match status" value="1"/>
</dbReference>
<dbReference type="PANTHER" id="PTHR42865">
    <property type="entry name" value="PROTON/GLUTAMATE-ASPARTATE SYMPORTER"/>
    <property type="match status" value="1"/>
</dbReference>
<dbReference type="PANTHER" id="PTHR42865:SF8">
    <property type="entry name" value="SERINE_THREONINE TRANSPORTER SSTT"/>
    <property type="match status" value="1"/>
</dbReference>
<dbReference type="Pfam" id="PF00375">
    <property type="entry name" value="SDF"/>
    <property type="match status" value="1"/>
</dbReference>
<dbReference type="PRINTS" id="PR00173">
    <property type="entry name" value="EDTRNSPORT"/>
</dbReference>
<dbReference type="SUPFAM" id="SSF118215">
    <property type="entry name" value="Proton glutamate symport protein"/>
    <property type="match status" value="1"/>
</dbReference>
<dbReference type="PROSITE" id="PS00713">
    <property type="entry name" value="NA_DICARBOXYL_SYMP_1"/>
    <property type="match status" value="1"/>
</dbReference>
<sequence length="414" mass="43413">MATQRASGLLQRLAQGSLVKQILVGLVLGILLAWISKPAAEAVGLLGTLFVGALKAVAPVLVLMLVMASIANHQHGQKTNIRPILFLYLLGTFSAALAAVVFSFAFPSTLHLSSSAQDIVPPSGIVEVLRGLLMSMVSNPIDALLNANYIGILVWAVGLGFALRHGNETTKNLVNDMSNAVTFMVKLVIRFAPVGIFGLVSSTLATTGFSTLWGYAHLLVVLIGCMLLVALVVNPLLVFWKIRRNPYPLVFACLRESGVYAFFTRSSAANIPVNMALCEKLNLDRDTYSVSIPLGATINMAGAAITITVLTLAAVHTLGVPVDLPTALLLSVVASLCACGASGVAGGSLLLIPLACNMFGIPNDIAMQVVAVGFIIGVLQDSCETALNSSTDVLFTAAACQAEDERLANNALRS</sequence>